<name>AROC_STAAR</name>
<organism>
    <name type="scientific">Staphylococcus aureus (strain MRSA252)</name>
    <dbReference type="NCBI Taxonomy" id="282458"/>
    <lineage>
        <taxon>Bacteria</taxon>
        <taxon>Bacillati</taxon>
        <taxon>Bacillota</taxon>
        <taxon>Bacilli</taxon>
        <taxon>Bacillales</taxon>
        <taxon>Staphylococcaceae</taxon>
        <taxon>Staphylococcus</taxon>
    </lineage>
</organism>
<dbReference type="EC" id="4.2.3.5" evidence="1"/>
<dbReference type="EMBL" id="BX571856">
    <property type="protein sequence ID" value="CAG40475.1"/>
    <property type="molecule type" value="Genomic_DNA"/>
</dbReference>
<dbReference type="RefSeq" id="WP_001269937.1">
    <property type="nucleotide sequence ID" value="NC_002952.2"/>
</dbReference>
<dbReference type="SMR" id="Q6GGU3"/>
<dbReference type="KEGG" id="sar:SAR1477"/>
<dbReference type="HOGENOM" id="CLU_034547_2_0_9"/>
<dbReference type="UniPathway" id="UPA00053">
    <property type="reaction ID" value="UER00090"/>
</dbReference>
<dbReference type="Proteomes" id="UP000000596">
    <property type="component" value="Chromosome"/>
</dbReference>
<dbReference type="GO" id="GO:0005829">
    <property type="term" value="C:cytosol"/>
    <property type="evidence" value="ECO:0007669"/>
    <property type="project" value="TreeGrafter"/>
</dbReference>
<dbReference type="GO" id="GO:0004107">
    <property type="term" value="F:chorismate synthase activity"/>
    <property type="evidence" value="ECO:0007669"/>
    <property type="project" value="UniProtKB-UniRule"/>
</dbReference>
<dbReference type="GO" id="GO:0010181">
    <property type="term" value="F:FMN binding"/>
    <property type="evidence" value="ECO:0007669"/>
    <property type="project" value="TreeGrafter"/>
</dbReference>
<dbReference type="GO" id="GO:0008652">
    <property type="term" value="P:amino acid biosynthetic process"/>
    <property type="evidence" value="ECO:0007669"/>
    <property type="project" value="UniProtKB-KW"/>
</dbReference>
<dbReference type="GO" id="GO:0009073">
    <property type="term" value="P:aromatic amino acid family biosynthetic process"/>
    <property type="evidence" value="ECO:0007669"/>
    <property type="project" value="UniProtKB-KW"/>
</dbReference>
<dbReference type="GO" id="GO:0009423">
    <property type="term" value="P:chorismate biosynthetic process"/>
    <property type="evidence" value="ECO:0007669"/>
    <property type="project" value="UniProtKB-UniRule"/>
</dbReference>
<dbReference type="CDD" id="cd07304">
    <property type="entry name" value="Chorismate_synthase"/>
    <property type="match status" value="1"/>
</dbReference>
<dbReference type="FunFam" id="3.60.150.10:FF:000002">
    <property type="entry name" value="Chorismate synthase"/>
    <property type="match status" value="1"/>
</dbReference>
<dbReference type="Gene3D" id="3.60.150.10">
    <property type="entry name" value="Chorismate synthase AroC"/>
    <property type="match status" value="1"/>
</dbReference>
<dbReference type="HAMAP" id="MF_00300">
    <property type="entry name" value="Chorismate_synth"/>
    <property type="match status" value="1"/>
</dbReference>
<dbReference type="InterPro" id="IPR000453">
    <property type="entry name" value="Chorismate_synth"/>
</dbReference>
<dbReference type="InterPro" id="IPR035904">
    <property type="entry name" value="Chorismate_synth_AroC_sf"/>
</dbReference>
<dbReference type="InterPro" id="IPR020541">
    <property type="entry name" value="Chorismate_synthase_CS"/>
</dbReference>
<dbReference type="NCBIfam" id="TIGR00033">
    <property type="entry name" value="aroC"/>
    <property type="match status" value="1"/>
</dbReference>
<dbReference type="NCBIfam" id="NF003793">
    <property type="entry name" value="PRK05382.1"/>
    <property type="match status" value="1"/>
</dbReference>
<dbReference type="PANTHER" id="PTHR21085">
    <property type="entry name" value="CHORISMATE SYNTHASE"/>
    <property type="match status" value="1"/>
</dbReference>
<dbReference type="PANTHER" id="PTHR21085:SF0">
    <property type="entry name" value="CHORISMATE SYNTHASE"/>
    <property type="match status" value="1"/>
</dbReference>
<dbReference type="Pfam" id="PF01264">
    <property type="entry name" value="Chorismate_synt"/>
    <property type="match status" value="1"/>
</dbReference>
<dbReference type="PIRSF" id="PIRSF001456">
    <property type="entry name" value="Chorismate_synth"/>
    <property type="match status" value="1"/>
</dbReference>
<dbReference type="SUPFAM" id="SSF103263">
    <property type="entry name" value="Chorismate synthase, AroC"/>
    <property type="match status" value="1"/>
</dbReference>
<dbReference type="PROSITE" id="PS00787">
    <property type="entry name" value="CHORISMATE_SYNTHASE_1"/>
    <property type="match status" value="1"/>
</dbReference>
<dbReference type="PROSITE" id="PS00788">
    <property type="entry name" value="CHORISMATE_SYNTHASE_2"/>
    <property type="match status" value="1"/>
</dbReference>
<dbReference type="PROSITE" id="PS00789">
    <property type="entry name" value="CHORISMATE_SYNTHASE_3"/>
    <property type="match status" value="1"/>
</dbReference>
<keyword id="KW-0028">Amino-acid biosynthesis</keyword>
<keyword id="KW-0057">Aromatic amino acid biosynthesis</keyword>
<keyword id="KW-0274">FAD</keyword>
<keyword id="KW-0285">Flavoprotein</keyword>
<keyword id="KW-0288">FMN</keyword>
<keyword id="KW-0456">Lyase</keyword>
<keyword id="KW-0521">NADP</keyword>
<proteinExistence type="inferred from homology"/>
<protein>
    <recommendedName>
        <fullName evidence="1">Chorismate synthase</fullName>
        <shortName evidence="1">CS</shortName>
        <ecNumber evidence="1">4.2.3.5</ecNumber>
    </recommendedName>
    <alternativeName>
        <fullName evidence="1">5-enolpyruvylshikimate-3-phosphate phospholyase</fullName>
    </alternativeName>
</protein>
<feature type="chain" id="PRO_0000140644" description="Chorismate synthase">
    <location>
        <begin position="1"/>
        <end position="388"/>
    </location>
</feature>
<feature type="binding site" evidence="1">
    <location>
        <position position="39"/>
    </location>
    <ligand>
        <name>NADP(+)</name>
        <dbReference type="ChEBI" id="CHEBI:58349"/>
    </ligand>
</feature>
<feature type="binding site" evidence="1">
    <location>
        <position position="45"/>
    </location>
    <ligand>
        <name>NADP(+)</name>
        <dbReference type="ChEBI" id="CHEBI:58349"/>
    </ligand>
</feature>
<feature type="binding site" evidence="1">
    <location>
        <begin position="132"/>
        <end position="134"/>
    </location>
    <ligand>
        <name>FMN</name>
        <dbReference type="ChEBI" id="CHEBI:58210"/>
    </ligand>
</feature>
<feature type="binding site" evidence="1">
    <location>
        <begin position="251"/>
        <end position="252"/>
    </location>
    <ligand>
        <name>FMN</name>
        <dbReference type="ChEBI" id="CHEBI:58210"/>
    </ligand>
</feature>
<feature type="binding site" evidence="1">
    <location>
        <position position="296"/>
    </location>
    <ligand>
        <name>FMN</name>
        <dbReference type="ChEBI" id="CHEBI:58210"/>
    </ligand>
</feature>
<feature type="binding site" evidence="1">
    <location>
        <begin position="311"/>
        <end position="315"/>
    </location>
    <ligand>
        <name>FMN</name>
        <dbReference type="ChEBI" id="CHEBI:58210"/>
    </ligand>
</feature>
<feature type="binding site" evidence="1">
    <location>
        <position position="337"/>
    </location>
    <ligand>
        <name>FMN</name>
        <dbReference type="ChEBI" id="CHEBI:58210"/>
    </ligand>
</feature>
<comment type="function">
    <text evidence="1">Catalyzes the anti-1,4-elimination of the C-3 phosphate and the C-6 proR hydrogen from 5-enolpyruvylshikimate-3-phosphate (EPSP) to yield chorismate, which is the branch point compound that serves as the starting substrate for the three terminal pathways of aromatic amino acid biosynthesis. This reaction introduces a second double bond into the aromatic ring system.</text>
</comment>
<comment type="catalytic activity">
    <reaction evidence="1">
        <text>5-O-(1-carboxyvinyl)-3-phosphoshikimate = chorismate + phosphate</text>
        <dbReference type="Rhea" id="RHEA:21020"/>
        <dbReference type="ChEBI" id="CHEBI:29748"/>
        <dbReference type="ChEBI" id="CHEBI:43474"/>
        <dbReference type="ChEBI" id="CHEBI:57701"/>
        <dbReference type="EC" id="4.2.3.5"/>
    </reaction>
</comment>
<comment type="cofactor">
    <cofactor evidence="1">
        <name>FMNH2</name>
        <dbReference type="ChEBI" id="CHEBI:57618"/>
    </cofactor>
    <text evidence="1">Reduced FMN (FMNH(2)).</text>
</comment>
<comment type="pathway">
    <text evidence="1">Metabolic intermediate biosynthesis; chorismate biosynthesis; chorismate from D-erythrose 4-phosphate and phosphoenolpyruvate: step 7/7.</text>
</comment>
<comment type="subunit">
    <text evidence="1">Homotetramer.</text>
</comment>
<comment type="similarity">
    <text evidence="1">Belongs to the chorismate synthase family.</text>
</comment>
<gene>
    <name evidence="1" type="primary">aroC</name>
    <name type="ordered locus">SAR1477</name>
</gene>
<evidence type="ECO:0000255" key="1">
    <source>
        <dbReference type="HAMAP-Rule" id="MF_00300"/>
    </source>
</evidence>
<reference key="1">
    <citation type="journal article" date="2004" name="Proc. Natl. Acad. Sci. U.S.A.">
        <title>Complete genomes of two clinical Staphylococcus aureus strains: evidence for the rapid evolution of virulence and drug resistance.</title>
        <authorList>
            <person name="Holden M.T.G."/>
            <person name="Feil E.J."/>
            <person name="Lindsay J.A."/>
            <person name="Peacock S.J."/>
            <person name="Day N.P.J."/>
            <person name="Enright M.C."/>
            <person name="Foster T.J."/>
            <person name="Moore C.E."/>
            <person name="Hurst L."/>
            <person name="Atkin R."/>
            <person name="Barron A."/>
            <person name="Bason N."/>
            <person name="Bentley S.D."/>
            <person name="Chillingworth C."/>
            <person name="Chillingworth T."/>
            <person name="Churcher C."/>
            <person name="Clark L."/>
            <person name="Corton C."/>
            <person name="Cronin A."/>
            <person name="Doggett J."/>
            <person name="Dowd L."/>
            <person name="Feltwell T."/>
            <person name="Hance Z."/>
            <person name="Harris B."/>
            <person name="Hauser H."/>
            <person name="Holroyd S."/>
            <person name="Jagels K."/>
            <person name="James K.D."/>
            <person name="Lennard N."/>
            <person name="Line A."/>
            <person name="Mayes R."/>
            <person name="Moule S."/>
            <person name="Mungall K."/>
            <person name="Ormond D."/>
            <person name="Quail M.A."/>
            <person name="Rabbinowitsch E."/>
            <person name="Rutherford K.M."/>
            <person name="Sanders M."/>
            <person name="Sharp S."/>
            <person name="Simmonds M."/>
            <person name="Stevens K."/>
            <person name="Whitehead S."/>
            <person name="Barrell B.G."/>
            <person name="Spratt B.G."/>
            <person name="Parkhill J."/>
        </authorList>
    </citation>
    <scope>NUCLEOTIDE SEQUENCE [LARGE SCALE GENOMIC DNA]</scope>
    <source>
        <strain>MRSA252</strain>
    </source>
</reference>
<accession>Q6GGU3</accession>
<sequence>MRYLTSGESHGPQLTVIVEGVPANLEIKVEDINKEMFKRQGGYGRGRRMQIEKDTVEIVSGVRNGYTLGSPITMVVTNDDFTHWRKIMGAAPISDEERENMKRTITKPRPGHADLVGGMKYNHRDLRNVLERSSARETAARVAVGALCKVLLEQLDIEIYSRVVEIGGIKDKDFYDSETFKANLDRNDVRVIDDGIAQAMRDKIDEAKNDGDSIGGVVQVVVENMPVGVGSYVHYDRKLDGRIAQGVVSINAFKGVSFGEGFKAAEKPGSEIQDEILYNTELGYYRGSNHLGGLEGGMSNGMPIIVNGVMKPIPTLYKPLNSVDINTKEDFKATIERSDSCAVPAASIVCEHVVAFEIAKALLEEFQSNHIEQLQQQIADRRQLNVEF</sequence>